<reference key="1">
    <citation type="journal article" date="2000" name="Nature">
        <title>Sequence and analysis of chromosome 1 of the plant Arabidopsis thaliana.</title>
        <authorList>
            <person name="Theologis A."/>
            <person name="Ecker J.R."/>
            <person name="Palm C.J."/>
            <person name="Federspiel N.A."/>
            <person name="Kaul S."/>
            <person name="White O."/>
            <person name="Alonso J."/>
            <person name="Altafi H."/>
            <person name="Araujo R."/>
            <person name="Bowman C.L."/>
            <person name="Brooks S.Y."/>
            <person name="Buehler E."/>
            <person name="Chan A."/>
            <person name="Chao Q."/>
            <person name="Chen H."/>
            <person name="Cheuk R.F."/>
            <person name="Chin C.W."/>
            <person name="Chung M.K."/>
            <person name="Conn L."/>
            <person name="Conway A.B."/>
            <person name="Conway A.R."/>
            <person name="Creasy T.H."/>
            <person name="Dewar K."/>
            <person name="Dunn P."/>
            <person name="Etgu P."/>
            <person name="Feldblyum T.V."/>
            <person name="Feng J.-D."/>
            <person name="Fong B."/>
            <person name="Fujii C.Y."/>
            <person name="Gill J.E."/>
            <person name="Goldsmith A.D."/>
            <person name="Haas B."/>
            <person name="Hansen N.F."/>
            <person name="Hughes B."/>
            <person name="Huizar L."/>
            <person name="Hunter J.L."/>
            <person name="Jenkins J."/>
            <person name="Johnson-Hopson C."/>
            <person name="Khan S."/>
            <person name="Khaykin E."/>
            <person name="Kim C.J."/>
            <person name="Koo H.L."/>
            <person name="Kremenetskaia I."/>
            <person name="Kurtz D.B."/>
            <person name="Kwan A."/>
            <person name="Lam B."/>
            <person name="Langin-Hooper S."/>
            <person name="Lee A."/>
            <person name="Lee J.M."/>
            <person name="Lenz C.A."/>
            <person name="Li J.H."/>
            <person name="Li Y.-P."/>
            <person name="Lin X."/>
            <person name="Liu S.X."/>
            <person name="Liu Z.A."/>
            <person name="Luros J.S."/>
            <person name="Maiti R."/>
            <person name="Marziali A."/>
            <person name="Militscher J."/>
            <person name="Miranda M."/>
            <person name="Nguyen M."/>
            <person name="Nierman W.C."/>
            <person name="Osborne B.I."/>
            <person name="Pai G."/>
            <person name="Peterson J."/>
            <person name="Pham P.K."/>
            <person name="Rizzo M."/>
            <person name="Rooney T."/>
            <person name="Rowley D."/>
            <person name="Sakano H."/>
            <person name="Salzberg S.L."/>
            <person name="Schwartz J.R."/>
            <person name="Shinn P."/>
            <person name="Southwick A.M."/>
            <person name="Sun H."/>
            <person name="Tallon L.J."/>
            <person name="Tambunga G."/>
            <person name="Toriumi M.J."/>
            <person name="Town C.D."/>
            <person name="Utterback T."/>
            <person name="Van Aken S."/>
            <person name="Vaysberg M."/>
            <person name="Vysotskaia V.S."/>
            <person name="Walker M."/>
            <person name="Wu D."/>
            <person name="Yu G."/>
            <person name="Fraser C.M."/>
            <person name="Venter J.C."/>
            <person name="Davis R.W."/>
        </authorList>
    </citation>
    <scope>NUCLEOTIDE SEQUENCE [LARGE SCALE GENOMIC DNA]</scope>
    <source>
        <strain>cv. Columbia</strain>
    </source>
</reference>
<reference key="2">
    <citation type="journal article" date="2017" name="Plant J.">
        <title>Araport11: a complete reannotation of the Arabidopsis thaliana reference genome.</title>
        <authorList>
            <person name="Cheng C.Y."/>
            <person name="Krishnakumar V."/>
            <person name="Chan A.P."/>
            <person name="Thibaud-Nissen F."/>
            <person name="Schobel S."/>
            <person name="Town C.D."/>
        </authorList>
    </citation>
    <scope>GENOME REANNOTATION</scope>
    <source>
        <strain>cv. Columbia</strain>
    </source>
</reference>
<reference key="3">
    <citation type="journal article" date="2004" name="Plant Physiol.">
        <title>Genome-wide analysis of the cyclin family in Arabidopsis and comparative phylogenetic analysis of plant cyclin-like proteins.</title>
        <authorList>
            <person name="Wang G."/>
            <person name="Kong H."/>
            <person name="Sun Y."/>
            <person name="Zhang X."/>
            <person name="Zhang W."/>
            <person name="Altman N."/>
            <person name="dePamphilis C.W."/>
            <person name="Ma H."/>
        </authorList>
    </citation>
    <scope>GENE FAMILY</scope>
    <scope>NOMENCLATURE</scope>
</reference>
<organism>
    <name type="scientific">Arabidopsis thaliana</name>
    <name type="common">Mouse-ear cress</name>
    <dbReference type="NCBI Taxonomy" id="3702"/>
    <lineage>
        <taxon>Eukaryota</taxon>
        <taxon>Viridiplantae</taxon>
        <taxon>Streptophyta</taxon>
        <taxon>Embryophyta</taxon>
        <taxon>Tracheophyta</taxon>
        <taxon>Spermatophyta</taxon>
        <taxon>Magnoliopsida</taxon>
        <taxon>eudicotyledons</taxon>
        <taxon>Gunneridae</taxon>
        <taxon>Pentapetalae</taxon>
        <taxon>rosids</taxon>
        <taxon>malvids</taxon>
        <taxon>Brassicales</taxon>
        <taxon>Brassicaceae</taxon>
        <taxon>Camelineae</taxon>
        <taxon>Arabidopsis</taxon>
    </lineage>
</organism>
<comment type="interaction">
    <interactant intactId="EBI-25518099">
        <id>Q9C968</id>
    </interactant>
    <interactant intactId="EBI-15193683">
        <id>Q5CCK4</id>
        <label>VAL2</label>
    </interactant>
    <organismsDiffer>false</organismsDiffer>
    <experiments>3</experiments>
</comment>
<comment type="similarity">
    <text evidence="1">Belongs to the cyclin family. Cyclin AB subfamily.</text>
</comment>
<gene>
    <name type="primary">CYCA2-4</name>
    <name type="ordered locus">At1g80370</name>
    <name type="ORF">F5I6.12</name>
</gene>
<evidence type="ECO:0000305" key="1"/>
<proteinExistence type="evidence at transcript level"/>
<accession>Q9C968</accession>
<sequence>MGKENAVSGNSIPIHGRPVTRALASALRASSKLITSSEVAATTQNQGRVLRAKSKRTALDEKKANAPKKRAVLKDITNVTCENSYTSCFSVAVENIKQIKKGRQSSSSSKVASSSATSQVTDAKVEVVSNSAGASLSVFTDTSLGTNETSYSIIAKPSSRSPPRPFGTVERSCGGASSPKFVDIDSDDKDPLLCSLYAPDIYYNLRVAELKRRPFPDFMEKTQRDVTETMRGILVDWLVEVSEEYTLVPDTLYLTVYLIDWFLHGNYVERQRLQLLGITCMLIASKYEEIHAPRIEEFCFITDNTYTRDQVLEMESQVLKHFSFQIYTPTSKTFLRRFLRAAQVSFPNQSLEMEFLANYLTELTLMDYPFLKFLPSIIAASAVFLAKWTLNQSSHPWNPTLEHYTTYKASDLKASVHALQDLQLNTKGCSLNSIRMKYRQDKFKSVAVFSSGELPDKLFIS</sequence>
<dbReference type="EMBL" id="AC018848">
    <property type="protein sequence ID" value="AAG52439.1"/>
    <property type="molecule type" value="Genomic_DNA"/>
</dbReference>
<dbReference type="EMBL" id="CP002684">
    <property type="protein sequence ID" value="AEE36392.1"/>
    <property type="molecule type" value="Genomic_DNA"/>
</dbReference>
<dbReference type="PIR" id="D96835">
    <property type="entry name" value="D96835"/>
</dbReference>
<dbReference type="RefSeq" id="NP_178153.1">
    <property type="nucleotide sequence ID" value="NM_106686.3"/>
</dbReference>
<dbReference type="SMR" id="Q9C968"/>
<dbReference type="BioGRID" id="29595">
    <property type="interactions" value="10"/>
</dbReference>
<dbReference type="FunCoup" id="Q9C968">
    <property type="interactions" value="1993"/>
</dbReference>
<dbReference type="IntAct" id="Q9C968">
    <property type="interactions" value="1"/>
</dbReference>
<dbReference type="STRING" id="3702.Q9C968"/>
<dbReference type="PaxDb" id="3702-AT1G80370.1"/>
<dbReference type="ProteomicsDB" id="239155"/>
<dbReference type="EnsemblPlants" id="AT1G80370.1">
    <property type="protein sequence ID" value="AT1G80370.1"/>
    <property type="gene ID" value="AT1G80370"/>
</dbReference>
<dbReference type="GeneID" id="844377"/>
<dbReference type="Gramene" id="AT1G80370.1">
    <property type="protein sequence ID" value="AT1G80370.1"/>
    <property type="gene ID" value="AT1G80370"/>
</dbReference>
<dbReference type="KEGG" id="ath:AT1G80370"/>
<dbReference type="Araport" id="AT1G80370"/>
<dbReference type="TAIR" id="AT1G80370">
    <property type="gene designation" value="CYCA2"/>
</dbReference>
<dbReference type="eggNOG" id="KOG0654">
    <property type="taxonomic scope" value="Eukaryota"/>
</dbReference>
<dbReference type="HOGENOM" id="CLU_020695_13_3_1"/>
<dbReference type="InParanoid" id="Q9C968"/>
<dbReference type="OMA" id="HGNCMER"/>
<dbReference type="OrthoDB" id="5590282at2759"/>
<dbReference type="PhylomeDB" id="Q9C968"/>
<dbReference type="PRO" id="PR:Q9C968"/>
<dbReference type="Proteomes" id="UP000006548">
    <property type="component" value="Chromosome 1"/>
</dbReference>
<dbReference type="ExpressionAtlas" id="Q9C968">
    <property type="expression patterns" value="baseline and differential"/>
</dbReference>
<dbReference type="GO" id="GO:0005634">
    <property type="term" value="C:nucleus"/>
    <property type="evidence" value="ECO:0000314"/>
    <property type="project" value="TAIR"/>
</dbReference>
<dbReference type="GO" id="GO:0016538">
    <property type="term" value="F:cyclin-dependent protein serine/threonine kinase regulator activity"/>
    <property type="evidence" value="ECO:0007669"/>
    <property type="project" value="InterPro"/>
</dbReference>
<dbReference type="GO" id="GO:0051301">
    <property type="term" value="P:cell division"/>
    <property type="evidence" value="ECO:0000316"/>
    <property type="project" value="TAIR"/>
</dbReference>
<dbReference type="GO" id="GO:0044772">
    <property type="term" value="P:mitotic cell cycle phase transition"/>
    <property type="evidence" value="ECO:0007669"/>
    <property type="project" value="InterPro"/>
</dbReference>
<dbReference type="GO" id="GO:0010389">
    <property type="term" value="P:regulation of G2/M transition of mitotic cell cycle"/>
    <property type="evidence" value="ECO:0000316"/>
    <property type="project" value="TAIR"/>
</dbReference>
<dbReference type="GO" id="GO:0010374">
    <property type="term" value="P:stomatal complex development"/>
    <property type="evidence" value="ECO:0000316"/>
    <property type="project" value="TAIR"/>
</dbReference>
<dbReference type="CDD" id="cd20506">
    <property type="entry name" value="CYCLIN_AtCycA-like_rpt2"/>
    <property type="match status" value="1"/>
</dbReference>
<dbReference type="CDD" id="cd20562">
    <property type="entry name" value="CYCLIN_AtCycA_like_rpt1"/>
    <property type="match status" value="1"/>
</dbReference>
<dbReference type="FunFam" id="1.10.472.10:FF:000013">
    <property type="entry name" value="Cyclin A1"/>
    <property type="match status" value="1"/>
</dbReference>
<dbReference type="FunFam" id="1.10.472.10:FF:000167">
    <property type="entry name" value="Mitotic cyclin 6"/>
    <property type="match status" value="1"/>
</dbReference>
<dbReference type="Gene3D" id="1.10.472.10">
    <property type="entry name" value="Cyclin-like"/>
    <property type="match status" value="2"/>
</dbReference>
<dbReference type="InterPro" id="IPR039361">
    <property type="entry name" value="Cyclin"/>
</dbReference>
<dbReference type="InterPro" id="IPR013763">
    <property type="entry name" value="Cyclin-like_dom"/>
</dbReference>
<dbReference type="InterPro" id="IPR036915">
    <property type="entry name" value="Cyclin-like_sf"/>
</dbReference>
<dbReference type="InterPro" id="IPR046965">
    <property type="entry name" value="Cyclin_A/B-like"/>
</dbReference>
<dbReference type="InterPro" id="IPR004367">
    <property type="entry name" value="Cyclin_C-dom"/>
</dbReference>
<dbReference type="InterPro" id="IPR006671">
    <property type="entry name" value="Cyclin_N"/>
</dbReference>
<dbReference type="PANTHER" id="PTHR10177">
    <property type="entry name" value="CYCLINS"/>
    <property type="match status" value="1"/>
</dbReference>
<dbReference type="Pfam" id="PF02984">
    <property type="entry name" value="Cyclin_C"/>
    <property type="match status" value="1"/>
</dbReference>
<dbReference type="Pfam" id="PF00134">
    <property type="entry name" value="Cyclin_N"/>
    <property type="match status" value="1"/>
</dbReference>
<dbReference type="PIRSF" id="PIRSF001771">
    <property type="entry name" value="Cyclin_A_B_D_E"/>
    <property type="match status" value="1"/>
</dbReference>
<dbReference type="SMART" id="SM00385">
    <property type="entry name" value="CYCLIN"/>
    <property type="match status" value="2"/>
</dbReference>
<dbReference type="SMART" id="SM01332">
    <property type="entry name" value="Cyclin_C"/>
    <property type="match status" value="1"/>
</dbReference>
<dbReference type="SUPFAM" id="SSF47954">
    <property type="entry name" value="Cyclin-like"/>
    <property type="match status" value="2"/>
</dbReference>
<feature type="chain" id="PRO_0000286996" description="Cyclin-A2-4">
    <location>
        <begin position="1"/>
        <end position="461"/>
    </location>
</feature>
<name>CCA24_ARATH</name>
<keyword id="KW-0131">Cell cycle</keyword>
<keyword id="KW-0132">Cell division</keyword>
<keyword id="KW-0195">Cyclin</keyword>
<keyword id="KW-1185">Reference proteome</keyword>
<protein>
    <recommendedName>
        <fullName>Cyclin-A2-4</fullName>
    </recommendedName>
    <alternativeName>
        <fullName>G2/mitotic-specific cyclin-A2-4</fullName>
        <shortName>CycA2;4</shortName>
    </alternativeName>
</protein>